<accession>Q9M350</accession>
<accession>Q6NLC2</accession>
<feature type="chain" id="PRO_0000078127" description="Gamma-tubulin complex component 4">
    <location>
        <begin position="1"/>
        <end position="745"/>
    </location>
</feature>
<comment type="function">
    <text evidence="1">Gamma-tubulin complex is necessary for microtubule nucleation at the microtubule organizing centers (MTOCs).</text>
</comment>
<comment type="function">
    <text evidence="1">Gamma-tubulin complex is essential for the control of microtubular network remodeling in the course of initiation and development of giant-feeding cells, and for the successful reproduction of nematodes (e.g. Meloidogyne spp.) in their plant hosts (By similarity).</text>
</comment>
<comment type="subunit">
    <text>Gamma-tubulin complex is composed of gamma-tubulin and GCP proteins.</text>
</comment>
<comment type="subcellular location">
    <subcellularLocation>
        <location evidence="2">Cytoplasm</location>
        <location evidence="2">Cytoskeleton</location>
        <location evidence="2">Microtubule organizing center</location>
    </subcellularLocation>
    <subcellularLocation>
        <location evidence="4">Cytoplasm</location>
        <location evidence="4">Cytoskeleton</location>
        <location evidence="4">Spindle</location>
    </subcellularLocation>
</comment>
<comment type="induction">
    <text evidence="3">Up-regulated in galls upon nematode infection.</text>
</comment>
<comment type="similarity">
    <text evidence="5">Belongs to the TUBGCP family.</text>
</comment>
<comment type="sequence caution" evidence="5">
    <conflict type="erroneous gene model prediction">
        <sequence resource="EMBL-CDS" id="CAB88338"/>
    </conflict>
</comment>
<dbReference type="EMBL" id="AL132960">
    <property type="protein sequence ID" value="CAB88338.1"/>
    <property type="status" value="ALT_SEQ"/>
    <property type="molecule type" value="Genomic_DNA"/>
</dbReference>
<dbReference type="EMBL" id="CP002686">
    <property type="protein sequence ID" value="AEE79139.1"/>
    <property type="molecule type" value="Genomic_DNA"/>
</dbReference>
<dbReference type="EMBL" id="BT012227">
    <property type="protein sequence ID" value="AAS76714.1"/>
    <property type="molecule type" value="mRNA"/>
</dbReference>
<dbReference type="EMBL" id="BT012412">
    <property type="protein sequence ID" value="AAS92328.1"/>
    <property type="molecule type" value="mRNA"/>
</dbReference>
<dbReference type="PIR" id="T45916">
    <property type="entry name" value="T45916"/>
</dbReference>
<dbReference type="RefSeq" id="NP_190944.2">
    <property type="nucleotide sequence ID" value="NM_115236.4"/>
</dbReference>
<dbReference type="SMR" id="Q9M350"/>
<dbReference type="BioGRID" id="9860">
    <property type="interactions" value="3"/>
</dbReference>
<dbReference type="FunCoup" id="Q9M350">
    <property type="interactions" value="3941"/>
</dbReference>
<dbReference type="IntAct" id="Q9M350">
    <property type="interactions" value="1"/>
</dbReference>
<dbReference type="STRING" id="3702.Q9M350"/>
<dbReference type="iPTMnet" id="Q9M350"/>
<dbReference type="PaxDb" id="3702-AT3G53760.1"/>
<dbReference type="ProteomicsDB" id="247385"/>
<dbReference type="EnsemblPlants" id="AT3G53760.1">
    <property type="protein sequence ID" value="AT3G53760.1"/>
    <property type="gene ID" value="AT3G53760"/>
</dbReference>
<dbReference type="GeneID" id="824543"/>
<dbReference type="Gramene" id="AT3G53760.1">
    <property type="protein sequence ID" value="AT3G53760.1"/>
    <property type="gene ID" value="AT3G53760"/>
</dbReference>
<dbReference type="KEGG" id="ath:AT3G53760"/>
<dbReference type="Araport" id="AT3G53760"/>
<dbReference type="TAIR" id="AT3G53760">
    <property type="gene designation" value="GCP4"/>
</dbReference>
<dbReference type="eggNOG" id="KOG2065">
    <property type="taxonomic scope" value="Eukaryota"/>
</dbReference>
<dbReference type="HOGENOM" id="CLU_012029_0_0_1"/>
<dbReference type="InParanoid" id="Q9M350"/>
<dbReference type="OMA" id="QLSMWLL"/>
<dbReference type="PhylomeDB" id="Q9M350"/>
<dbReference type="CD-CODE" id="33FCD62D">
    <property type="entry name" value="Centrosome"/>
</dbReference>
<dbReference type="PRO" id="PR:Q9M350"/>
<dbReference type="Proteomes" id="UP000006548">
    <property type="component" value="Chromosome 3"/>
</dbReference>
<dbReference type="ExpressionAtlas" id="Q9M350">
    <property type="expression patterns" value="baseline and differential"/>
</dbReference>
<dbReference type="GO" id="GO:0005737">
    <property type="term" value="C:cytoplasm"/>
    <property type="evidence" value="ECO:0007669"/>
    <property type="project" value="UniProtKB-KW"/>
</dbReference>
<dbReference type="GO" id="GO:0005874">
    <property type="term" value="C:microtubule"/>
    <property type="evidence" value="ECO:0007669"/>
    <property type="project" value="UniProtKB-KW"/>
</dbReference>
<dbReference type="GO" id="GO:0005815">
    <property type="term" value="C:microtubule organizing center"/>
    <property type="evidence" value="ECO:0007669"/>
    <property type="project" value="UniProtKB-SubCell"/>
</dbReference>
<dbReference type="GO" id="GO:0009506">
    <property type="term" value="C:plasmodesma"/>
    <property type="evidence" value="ECO:0007005"/>
    <property type="project" value="TAIR"/>
</dbReference>
<dbReference type="GO" id="GO:0005819">
    <property type="term" value="C:spindle"/>
    <property type="evidence" value="ECO:0000314"/>
    <property type="project" value="UniProtKB"/>
</dbReference>
<dbReference type="GO" id="GO:0000922">
    <property type="term" value="C:spindle pole"/>
    <property type="evidence" value="ECO:0007669"/>
    <property type="project" value="InterPro"/>
</dbReference>
<dbReference type="GO" id="GO:0045298">
    <property type="term" value="C:tubulin complex"/>
    <property type="evidence" value="ECO:0000314"/>
    <property type="project" value="TAIR"/>
</dbReference>
<dbReference type="GO" id="GO:0043015">
    <property type="term" value="F:gamma-tubulin binding"/>
    <property type="evidence" value="ECO:0007669"/>
    <property type="project" value="InterPro"/>
</dbReference>
<dbReference type="GO" id="GO:0043622">
    <property type="term" value="P:cortical microtubule organization"/>
    <property type="evidence" value="ECO:0000315"/>
    <property type="project" value="TAIR"/>
</dbReference>
<dbReference type="GO" id="GO:0007020">
    <property type="term" value="P:microtubule nucleation"/>
    <property type="evidence" value="ECO:0000315"/>
    <property type="project" value="TAIR"/>
</dbReference>
<dbReference type="GO" id="GO:0009624">
    <property type="term" value="P:response to nematode"/>
    <property type="evidence" value="ECO:0000314"/>
    <property type="project" value="UniProtKB"/>
</dbReference>
<dbReference type="FunFam" id="1.20.120.1900:FF:000010">
    <property type="entry name" value="Gamma-tubulin complex component"/>
    <property type="match status" value="1"/>
</dbReference>
<dbReference type="Gene3D" id="1.20.120.1900">
    <property type="entry name" value="Gamma-tubulin complex, C-terminal domain"/>
    <property type="match status" value="1"/>
</dbReference>
<dbReference type="InterPro" id="IPR001387">
    <property type="entry name" value="Cro/C1-type_HTH"/>
</dbReference>
<dbReference type="InterPro" id="IPR007259">
    <property type="entry name" value="GCP"/>
</dbReference>
<dbReference type="InterPro" id="IPR040457">
    <property type="entry name" value="GCP_C"/>
</dbReference>
<dbReference type="InterPro" id="IPR042241">
    <property type="entry name" value="GCP_C_sf"/>
</dbReference>
<dbReference type="InterPro" id="IPR041470">
    <property type="entry name" value="GCP_N"/>
</dbReference>
<dbReference type="PANTHER" id="PTHR19302">
    <property type="entry name" value="GAMMA TUBULIN COMPLEX PROTEIN"/>
    <property type="match status" value="1"/>
</dbReference>
<dbReference type="PANTHER" id="PTHR19302:SF27">
    <property type="entry name" value="GAMMA-TUBULIN COMPLEX COMPONENT 4"/>
    <property type="match status" value="1"/>
</dbReference>
<dbReference type="Pfam" id="PF04130">
    <property type="entry name" value="GCP_C_terminal"/>
    <property type="match status" value="1"/>
</dbReference>
<dbReference type="Pfam" id="PF17681">
    <property type="entry name" value="GCP_N_terminal"/>
    <property type="match status" value="1"/>
</dbReference>
<name>GACP4_ARATH</name>
<evidence type="ECO:0000250" key="1"/>
<evidence type="ECO:0000250" key="2">
    <source>
        <dbReference type="UniProtKB" id="Q9BSJ2"/>
    </source>
</evidence>
<evidence type="ECO:0000269" key="3">
    <source>
    </source>
</evidence>
<evidence type="ECO:0000269" key="4">
    <source>
    </source>
</evidence>
<evidence type="ECO:0000305" key="5"/>
<sequence>MLHELLLALLGFTGDLIVDEREQRKTLGLAFNSDSPLSDECTFKLAPDISFIEPSERDLIERLIKLGFYYRELDRFAKKSRNLSWIRSVTSVHPLERADELSKQSREKKPSVYRRAIANGIGEILSVYRSAVLHIEQKLLAETTPILATVTEGLNKFFVLFPPLYEVILEIERDDIRGGQLLNVLNKRCHCGVPELRTCLQRLLWNGHQVMYNQLAAWMVYGILQDPHGEFFIKRQDDGDLDHRSSQEEVSEKLARTSVHETSLTDWHSGFHISLDMLPDYIPMRLGESILFAGKAIRVLRNPSPAFQFQKDKSFQQTMRGSQRIRGFMHSDFPETETELDADLTGGELLPQSEADKIEAMLKDLKESSEFHKRSFECTVDSVRAIAASHLWQLVVVRADLNGHLKALKDYFLLEKGDFFQCFLEESRQLMRLPPRQSTGESDLMVPFQLAATKTIAEEDKYFSRVSLRMPSFGVTVRSSQADMVRSKVSLTGKANLTSDTSVDGWDAIALEYSVDWPMQLFFTQEVLSKYLKVFQYLIRLKRTQMELEKSWASVMHQDHIESAQHRKDGLNGSTSQQRRQGIRPMWRVREHMAFLIRNLQFYIQVDVIESQWKVLQTHIHDSQDFTELVGFHQEYLSALISQSFLDIGSVSRILDSIMKLCLQFCWNIENQESNPNTSELENIAEEFNKKSNSLYTILRSSKLAGSQRAPFLRRFLLRLNFNSFYEATARGVLNVVRQRPALPL</sequence>
<keyword id="KW-0963">Cytoplasm</keyword>
<keyword id="KW-0206">Cytoskeleton</keyword>
<keyword id="KW-0493">Microtubule</keyword>
<keyword id="KW-1185">Reference proteome</keyword>
<reference key="1">
    <citation type="journal article" date="2000" name="Nature">
        <title>Sequence and analysis of chromosome 3 of the plant Arabidopsis thaliana.</title>
        <authorList>
            <person name="Salanoubat M."/>
            <person name="Lemcke K."/>
            <person name="Rieger M."/>
            <person name="Ansorge W."/>
            <person name="Unseld M."/>
            <person name="Fartmann B."/>
            <person name="Valle G."/>
            <person name="Bloecker H."/>
            <person name="Perez-Alonso M."/>
            <person name="Obermaier B."/>
            <person name="Delseny M."/>
            <person name="Boutry M."/>
            <person name="Grivell L.A."/>
            <person name="Mache R."/>
            <person name="Puigdomenech P."/>
            <person name="De Simone V."/>
            <person name="Choisne N."/>
            <person name="Artiguenave F."/>
            <person name="Robert C."/>
            <person name="Brottier P."/>
            <person name="Wincker P."/>
            <person name="Cattolico L."/>
            <person name="Weissenbach J."/>
            <person name="Saurin W."/>
            <person name="Quetier F."/>
            <person name="Schaefer M."/>
            <person name="Mueller-Auer S."/>
            <person name="Gabel C."/>
            <person name="Fuchs M."/>
            <person name="Benes V."/>
            <person name="Wurmbach E."/>
            <person name="Drzonek H."/>
            <person name="Erfle H."/>
            <person name="Jordan N."/>
            <person name="Bangert S."/>
            <person name="Wiedelmann R."/>
            <person name="Kranz H."/>
            <person name="Voss H."/>
            <person name="Holland R."/>
            <person name="Brandt P."/>
            <person name="Nyakatura G."/>
            <person name="Vezzi A."/>
            <person name="D'Angelo M."/>
            <person name="Pallavicini A."/>
            <person name="Toppo S."/>
            <person name="Simionati B."/>
            <person name="Conrad A."/>
            <person name="Hornischer K."/>
            <person name="Kauer G."/>
            <person name="Loehnert T.-H."/>
            <person name="Nordsiek G."/>
            <person name="Reichelt J."/>
            <person name="Scharfe M."/>
            <person name="Schoen O."/>
            <person name="Bargues M."/>
            <person name="Terol J."/>
            <person name="Climent J."/>
            <person name="Navarro P."/>
            <person name="Collado C."/>
            <person name="Perez-Perez A."/>
            <person name="Ottenwaelder B."/>
            <person name="Duchemin D."/>
            <person name="Cooke R."/>
            <person name="Laudie M."/>
            <person name="Berger-Llauro C."/>
            <person name="Purnelle B."/>
            <person name="Masuy D."/>
            <person name="de Haan M."/>
            <person name="Maarse A.C."/>
            <person name="Alcaraz J.-P."/>
            <person name="Cottet A."/>
            <person name="Casacuberta E."/>
            <person name="Monfort A."/>
            <person name="Argiriou A."/>
            <person name="Flores M."/>
            <person name="Liguori R."/>
            <person name="Vitale D."/>
            <person name="Mannhaupt G."/>
            <person name="Haase D."/>
            <person name="Schoof H."/>
            <person name="Rudd S."/>
            <person name="Zaccaria P."/>
            <person name="Mewes H.-W."/>
            <person name="Mayer K.F.X."/>
            <person name="Kaul S."/>
            <person name="Town C.D."/>
            <person name="Koo H.L."/>
            <person name="Tallon L.J."/>
            <person name="Jenkins J."/>
            <person name="Rooney T."/>
            <person name="Rizzo M."/>
            <person name="Walts A."/>
            <person name="Utterback T."/>
            <person name="Fujii C.Y."/>
            <person name="Shea T.P."/>
            <person name="Creasy T.H."/>
            <person name="Haas B."/>
            <person name="Maiti R."/>
            <person name="Wu D."/>
            <person name="Peterson J."/>
            <person name="Van Aken S."/>
            <person name="Pai G."/>
            <person name="Militscher J."/>
            <person name="Sellers P."/>
            <person name="Gill J.E."/>
            <person name="Feldblyum T.V."/>
            <person name="Preuss D."/>
            <person name="Lin X."/>
            <person name="Nierman W.C."/>
            <person name="Salzberg S.L."/>
            <person name="White O."/>
            <person name="Venter J.C."/>
            <person name="Fraser C.M."/>
            <person name="Kaneko T."/>
            <person name="Nakamura Y."/>
            <person name="Sato S."/>
            <person name="Kato T."/>
            <person name="Asamizu E."/>
            <person name="Sasamoto S."/>
            <person name="Kimura T."/>
            <person name="Idesawa K."/>
            <person name="Kawashima K."/>
            <person name="Kishida Y."/>
            <person name="Kiyokawa C."/>
            <person name="Kohara M."/>
            <person name="Matsumoto M."/>
            <person name="Matsuno A."/>
            <person name="Muraki A."/>
            <person name="Nakayama S."/>
            <person name="Nakazaki N."/>
            <person name="Shinpo S."/>
            <person name="Takeuchi C."/>
            <person name="Wada T."/>
            <person name="Watanabe A."/>
            <person name="Yamada M."/>
            <person name="Yasuda M."/>
            <person name="Tabata S."/>
        </authorList>
    </citation>
    <scope>NUCLEOTIDE SEQUENCE [LARGE SCALE GENOMIC DNA]</scope>
    <source>
        <strain>cv. Columbia</strain>
    </source>
</reference>
<reference key="2">
    <citation type="journal article" date="2017" name="Plant J.">
        <title>Araport11: a complete reannotation of the Arabidopsis thaliana reference genome.</title>
        <authorList>
            <person name="Cheng C.Y."/>
            <person name="Krishnakumar V."/>
            <person name="Chan A.P."/>
            <person name="Thibaud-Nissen F."/>
            <person name="Schobel S."/>
            <person name="Town C.D."/>
        </authorList>
    </citation>
    <scope>GENOME REANNOTATION</scope>
    <source>
        <strain>cv. Columbia</strain>
    </source>
</reference>
<reference key="3">
    <citation type="submission" date="2004-04" db="EMBL/GenBank/DDBJ databases">
        <title>Arabidopsis ORF clones.</title>
        <authorList>
            <person name="Shinn P."/>
            <person name="Chen H."/>
            <person name="Cheuk R.F."/>
            <person name="Kim C.J."/>
            <person name="Ecker J.R."/>
        </authorList>
    </citation>
    <scope>NUCLEOTIDE SEQUENCE [LARGE SCALE MRNA]</scope>
    <source>
        <strain>cv. Columbia</strain>
    </source>
</reference>
<reference key="4">
    <citation type="journal article" date="2011" name="PLoS Pathog.">
        <title>Feeding cells induced by phytoparasitic nematodes require gamma-tubulin ring complex for microtubule reorganization.</title>
        <authorList>
            <person name="Banora M.Y."/>
            <person name="Rodiuc N."/>
            <person name="Baldacci-Cresp F."/>
            <person name="Smertenko A."/>
            <person name="Bleve-Zacheo T."/>
            <person name="Mellilo M.T."/>
            <person name="Karimi M."/>
            <person name="Hilson P."/>
            <person name="Evrard J.L."/>
            <person name="Favery B."/>
            <person name="Engler G."/>
            <person name="Abad P."/>
            <person name="de Almeida Engler J."/>
        </authorList>
    </citation>
    <scope>INDUCTION BY NEMATODES</scope>
</reference>
<reference key="5">
    <citation type="journal article" date="2012" name="Plant Cell">
        <title>The GCP3-interacting proteins GIP1 and GIP2 are required for gamma-tubulin complex protein localization, spindle integrity, and chromosomal stability.</title>
        <authorList>
            <person name="Janski N."/>
            <person name="Masoud K."/>
            <person name="Batzenschlager M."/>
            <person name="Herzog E."/>
            <person name="Evrard J.L."/>
            <person name="Houlne G."/>
            <person name="Bourge M."/>
            <person name="Chaboute M.E."/>
            <person name="Schmit A.C."/>
        </authorList>
    </citation>
    <scope>SUBCELLULAR LOCATION</scope>
</reference>
<protein>
    <recommendedName>
        <fullName>Gamma-tubulin complex component 4</fullName>
        <shortName>AtGCP4</shortName>
        <shortName>GCP-4</shortName>
    </recommendedName>
</protein>
<proteinExistence type="evidence at transcript level"/>
<organism>
    <name type="scientific">Arabidopsis thaliana</name>
    <name type="common">Mouse-ear cress</name>
    <dbReference type="NCBI Taxonomy" id="3702"/>
    <lineage>
        <taxon>Eukaryota</taxon>
        <taxon>Viridiplantae</taxon>
        <taxon>Streptophyta</taxon>
        <taxon>Embryophyta</taxon>
        <taxon>Tracheophyta</taxon>
        <taxon>Spermatophyta</taxon>
        <taxon>Magnoliopsida</taxon>
        <taxon>eudicotyledons</taxon>
        <taxon>Gunneridae</taxon>
        <taxon>Pentapetalae</taxon>
        <taxon>rosids</taxon>
        <taxon>malvids</taxon>
        <taxon>Brassicales</taxon>
        <taxon>Brassicaceae</taxon>
        <taxon>Camelineae</taxon>
        <taxon>Arabidopsis</taxon>
    </lineage>
</organism>
<gene>
    <name type="primary">GCP4</name>
    <name type="ordered locus">At3g53760</name>
    <name type="ORF">F5K20_60</name>
</gene>